<comment type="function">
    <text evidence="1">Key enzyme in the regulation of glycerol uptake and metabolism. Catalyzes the phosphorylation of glycerol to yield sn-glycerol 3-phosphate.</text>
</comment>
<comment type="catalytic activity">
    <reaction evidence="1">
        <text>glycerol + ATP = sn-glycerol 3-phosphate + ADP + H(+)</text>
        <dbReference type="Rhea" id="RHEA:21644"/>
        <dbReference type="ChEBI" id="CHEBI:15378"/>
        <dbReference type="ChEBI" id="CHEBI:17754"/>
        <dbReference type="ChEBI" id="CHEBI:30616"/>
        <dbReference type="ChEBI" id="CHEBI:57597"/>
        <dbReference type="ChEBI" id="CHEBI:456216"/>
        <dbReference type="EC" id="2.7.1.30"/>
    </reaction>
</comment>
<comment type="activity regulation">
    <text evidence="1">Inhibited by fructose 1,6-bisphosphate (FBP).</text>
</comment>
<comment type="pathway">
    <text evidence="1">Polyol metabolism; glycerol degradation via glycerol kinase pathway; sn-glycerol 3-phosphate from glycerol: step 1/1.</text>
</comment>
<comment type="similarity">
    <text evidence="1">Belongs to the FGGY kinase family.</text>
</comment>
<reference key="1">
    <citation type="submission" date="2008-07" db="EMBL/GenBank/DDBJ databases">
        <title>Complete sequence of Geobacter bemidjiensis BEM.</title>
        <authorList>
            <consortium name="US DOE Joint Genome Institute"/>
            <person name="Lucas S."/>
            <person name="Copeland A."/>
            <person name="Lapidus A."/>
            <person name="Glavina del Rio T."/>
            <person name="Dalin E."/>
            <person name="Tice H."/>
            <person name="Bruce D."/>
            <person name="Goodwin L."/>
            <person name="Pitluck S."/>
            <person name="Kiss H."/>
            <person name="Brettin T."/>
            <person name="Detter J.C."/>
            <person name="Han C."/>
            <person name="Kuske C.R."/>
            <person name="Schmutz J."/>
            <person name="Larimer F."/>
            <person name="Land M."/>
            <person name="Hauser L."/>
            <person name="Kyrpides N."/>
            <person name="Lykidis A."/>
            <person name="Lovley D."/>
            <person name="Richardson P."/>
        </authorList>
    </citation>
    <scope>NUCLEOTIDE SEQUENCE [LARGE SCALE GENOMIC DNA]</scope>
    <source>
        <strain>ATCC BAA-1014 / DSM 16622 / JCM 12645 / Bem</strain>
    </source>
</reference>
<gene>
    <name evidence="1" type="primary">glpK</name>
    <name type="ordered locus">Gbem_3376</name>
</gene>
<keyword id="KW-0067">ATP-binding</keyword>
<keyword id="KW-0319">Glycerol metabolism</keyword>
<keyword id="KW-0418">Kinase</keyword>
<keyword id="KW-0547">Nucleotide-binding</keyword>
<keyword id="KW-1185">Reference proteome</keyword>
<keyword id="KW-0808">Transferase</keyword>
<sequence>MEYLLSIDQGTTSSRATLYAASGESLATASRPLAQHYPNPGWVEHDPQEIWEGQLACITEAVAKAGIAPSQIAGVGITNQRETTVVWERETGLPLHRAIVWQDRRTAELTESLKEQGLEAMVRERTGLLLDPYFSASKLCWLLDRVDGLRQRAERGEVCFGTVDSWLMFKLSGGKSHLTDISNASRTMLFNINTLEWDEELLRLFRIPRGMLPEVRGSAAGFGHTSGEVAGAEIHIAGVAGDQQAALFGQGCFAPGMAKATFGTGAFVVMNSGARPGVGDGALSTIAWQLPGEAVQYALEGSIFIAGAAVQWLQEGLGLIGNAREVEVLAASVPDSGGVYFVPALSGLGTPYWDPYARGVVAGLTRGSTKAHLARAALEAIAFQTLDAIRAMEQASGIALKELRVDGGAAANNLLLQIQADLLGVPVLRPRCTESTSLGAAFLAGIGAGVLDTSAIAAQWALDRRFEPQMERERREELHRGWQKCVRLSLGWEKN</sequence>
<dbReference type="EC" id="2.7.1.30" evidence="1"/>
<dbReference type="EMBL" id="CP001124">
    <property type="protein sequence ID" value="ACH40371.1"/>
    <property type="molecule type" value="Genomic_DNA"/>
</dbReference>
<dbReference type="RefSeq" id="WP_012531803.1">
    <property type="nucleotide sequence ID" value="NC_011146.1"/>
</dbReference>
<dbReference type="SMR" id="B5EB79"/>
<dbReference type="STRING" id="404380.Gbem_3376"/>
<dbReference type="KEGG" id="gbm:Gbem_3376"/>
<dbReference type="eggNOG" id="COG0554">
    <property type="taxonomic scope" value="Bacteria"/>
</dbReference>
<dbReference type="HOGENOM" id="CLU_009281_2_3_7"/>
<dbReference type="OrthoDB" id="9805576at2"/>
<dbReference type="UniPathway" id="UPA00618">
    <property type="reaction ID" value="UER00672"/>
</dbReference>
<dbReference type="Proteomes" id="UP000008825">
    <property type="component" value="Chromosome"/>
</dbReference>
<dbReference type="GO" id="GO:0005829">
    <property type="term" value="C:cytosol"/>
    <property type="evidence" value="ECO:0007669"/>
    <property type="project" value="TreeGrafter"/>
</dbReference>
<dbReference type="GO" id="GO:0005524">
    <property type="term" value="F:ATP binding"/>
    <property type="evidence" value="ECO:0007669"/>
    <property type="project" value="UniProtKB-UniRule"/>
</dbReference>
<dbReference type="GO" id="GO:0004370">
    <property type="term" value="F:glycerol kinase activity"/>
    <property type="evidence" value="ECO:0000250"/>
    <property type="project" value="UniProtKB"/>
</dbReference>
<dbReference type="GO" id="GO:0019563">
    <property type="term" value="P:glycerol catabolic process"/>
    <property type="evidence" value="ECO:0007669"/>
    <property type="project" value="UniProtKB-UniRule"/>
</dbReference>
<dbReference type="GO" id="GO:0006071">
    <property type="term" value="P:glycerol metabolic process"/>
    <property type="evidence" value="ECO:0000250"/>
    <property type="project" value="UniProtKB"/>
</dbReference>
<dbReference type="GO" id="GO:0006072">
    <property type="term" value="P:glycerol-3-phosphate metabolic process"/>
    <property type="evidence" value="ECO:0007669"/>
    <property type="project" value="InterPro"/>
</dbReference>
<dbReference type="CDD" id="cd07786">
    <property type="entry name" value="FGGY_EcGK_like"/>
    <property type="match status" value="1"/>
</dbReference>
<dbReference type="FunFam" id="3.30.420.40:FF:000007">
    <property type="entry name" value="Glycerol kinase"/>
    <property type="match status" value="1"/>
</dbReference>
<dbReference type="FunFam" id="3.30.420.40:FF:000008">
    <property type="entry name" value="Glycerol kinase"/>
    <property type="match status" value="1"/>
</dbReference>
<dbReference type="Gene3D" id="3.30.420.40">
    <property type="match status" value="2"/>
</dbReference>
<dbReference type="HAMAP" id="MF_00186">
    <property type="entry name" value="Glycerol_kin"/>
    <property type="match status" value="1"/>
</dbReference>
<dbReference type="InterPro" id="IPR043129">
    <property type="entry name" value="ATPase_NBD"/>
</dbReference>
<dbReference type="InterPro" id="IPR000577">
    <property type="entry name" value="Carb_kinase_FGGY"/>
</dbReference>
<dbReference type="InterPro" id="IPR018483">
    <property type="entry name" value="Carb_kinase_FGGY_CS"/>
</dbReference>
<dbReference type="InterPro" id="IPR018485">
    <property type="entry name" value="FGGY_C"/>
</dbReference>
<dbReference type="InterPro" id="IPR018484">
    <property type="entry name" value="FGGY_N"/>
</dbReference>
<dbReference type="InterPro" id="IPR005999">
    <property type="entry name" value="Glycerol_kin"/>
</dbReference>
<dbReference type="NCBIfam" id="TIGR01311">
    <property type="entry name" value="glycerol_kin"/>
    <property type="match status" value="1"/>
</dbReference>
<dbReference type="NCBIfam" id="NF000756">
    <property type="entry name" value="PRK00047.1"/>
    <property type="match status" value="1"/>
</dbReference>
<dbReference type="PANTHER" id="PTHR10196:SF69">
    <property type="entry name" value="GLYCEROL KINASE"/>
    <property type="match status" value="1"/>
</dbReference>
<dbReference type="PANTHER" id="PTHR10196">
    <property type="entry name" value="SUGAR KINASE"/>
    <property type="match status" value="1"/>
</dbReference>
<dbReference type="Pfam" id="PF02782">
    <property type="entry name" value="FGGY_C"/>
    <property type="match status" value="1"/>
</dbReference>
<dbReference type="Pfam" id="PF00370">
    <property type="entry name" value="FGGY_N"/>
    <property type="match status" value="1"/>
</dbReference>
<dbReference type="PIRSF" id="PIRSF000538">
    <property type="entry name" value="GlpK"/>
    <property type="match status" value="1"/>
</dbReference>
<dbReference type="SUPFAM" id="SSF53067">
    <property type="entry name" value="Actin-like ATPase domain"/>
    <property type="match status" value="2"/>
</dbReference>
<dbReference type="PROSITE" id="PS00445">
    <property type="entry name" value="FGGY_KINASES_2"/>
    <property type="match status" value="1"/>
</dbReference>
<feature type="chain" id="PRO_1000098732" description="Glycerol kinase">
    <location>
        <begin position="1"/>
        <end position="495"/>
    </location>
</feature>
<feature type="binding site" evidence="1">
    <location>
        <position position="11"/>
    </location>
    <ligand>
        <name>ADP</name>
        <dbReference type="ChEBI" id="CHEBI:456216"/>
    </ligand>
</feature>
<feature type="binding site" evidence="1">
    <location>
        <position position="11"/>
    </location>
    <ligand>
        <name>ATP</name>
        <dbReference type="ChEBI" id="CHEBI:30616"/>
    </ligand>
</feature>
<feature type="binding site" evidence="1">
    <location>
        <position position="11"/>
    </location>
    <ligand>
        <name>sn-glycerol 3-phosphate</name>
        <dbReference type="ChEBI" id="CHEBI:57597"/>
    </ligand>
</feature>
<feature type="binding site" evidence="1">
    <location>
        <position position="12"/>
    </location>
    <ligand>
        <name>ATP</name>
        <dbReference type="ChEBI" id="CHEBI:30616"/>
    </ligand>
</feature>
<feature type="binding site" evidence="1">
    <location>
        <position position="13"/>
    </location>
    <ligand>
        <name>ATP</name>
        <dbReference type="ChEBI" id="CHEBI:30616"/>
    </ligand>
</feature>
<feature type="binding site" evidence="1">
    <location>
        <position position="15"/>
    </location>
    <ligand>
        <name>ADP</name>
        <dbReference type="ChEBI" id="CHEBI:456216"/>
    </ligand>
</feature>
<feature type="binding site" evidence="1">
    <location>
        <position position="81"/>
    </location>
    <ligand>
        <name>glycerol</name>
        <dbReference type="ChEBI" id="CHEBI:17754"/>
    </ligand>
</feature>
<feature type="binding site" evidence="1">
    <location>
        <position position="81"/>
    </location>
    <ligand>
        <name>sn-glycerol 3-phosphate</name>
        <dbReference type="ChEBI" id="CHEBI:57597"/>
    </ligand>
</feature>
<feature type="binding site" evidence="1">
    <location>
        <position position="82"/>
    </location>
    <ligand>
        <name>glycerol</name>
        <dbReference type="ChEBI" id="CHEBI:17754"/>
    </ligand>
</feature>
<feature type="binding site" evidence="1">
    <location>
        <position position="82"/>
    </location>
    <ligand>
        <name>sn-glycerol 3-phosphate</name>
        <dbReference type="ChEBI" id="CHEBI:57597"/>
    </ligand>
</feature>
<feature type="binding site" evidence="1">
    <location>
        <position position="133"/>
    </location>
    <ligand>
        <name>glycerol</name>
        <dbReference type="ChEBI" id="CHEBI:17754"/>
    </ligand>
</feature>
<feature type="binding site" evidence="1">
    <location>
        <position position="133"/>
    </location>
    <ligand>
        <name>sn-glycerol 3-phosphate</name>
        <dbReference type="ChEBI" id="CHEBI:57597"/>
    </ligand>
</feature>
<feature type="binding site" evidence="1">
    <location>
        <position position="242"/>
    </location>
    <ligand>
        <name>glycerol</name>
        <dbReference type="ChEBI" id="CHEBI:17754"/>
    </ligand>
</feature>
<feature type="binding site" evidence="1">
    <location>
        <position position="242"/>
    </location>
    <ligand>
        <name>sn-glycerol 3-phosphate</name>
        <dbReference type="ChEBI" id="CHEBI:57597"/>
    </ligand>
</feature>
<feature type="binding site" evidence="1">
    <location>
        <position position="243"/>
    </location>
    <ligand>
        <name>glycerol</name>
        <dbReference type="ChEBI" id="CHEBI:17754"/>
    </ligand>
</feature>
<feature type="binding site" evidence="1">
    <location>
        <position position="264"/>
    </location>
    <ligand>
        <name>ADP</name>
        <dbReference type="ChEBI" id="CHEBI:456216"/>
    </ligand>
</feature>
<feature type="binding site" evidence="1">
    <location>
        <position position="264"/>
    </location>
    <ligand>
        <name>ATP</name>
        <dbReference type="ChEBI" id="CHEBI:30616"/>
    </ligand>
</feature>
<feature type="binding site" evidence="1">
    <location>
        <position position="307"/>
    </location>
    <ligand>
        <name>ADP</name>
        <dbReference type="ChEBI" id="CHEBI:456216"/>
    </ligand>
</feature>
<feature type="binding site" evidence="1">
    <location>
        <position position="307"/>
    </location>
    <ligand>
        <name>ATP</name>
        <dbReference type="ChEBI" id="CHEBI:30616"/>
    </ligand>
</feature>
<feature type="binding site" evidence="1">
    <location>
        <position position="311"/>
    </location>
    <ligand>
        <name>ATP</name>
        <dbReference type="ChEBI" id="CHEBI:30616"/>
    </ligand>
</feature>
<feature type="binding site" evidence="1">
    <location>
        <position position="408"/>
    </location>
    <ligand>
        <name>ADP</name>
        <dbReference type="ChEBI" id="CHEBI:456216"/>
    </ligand>
</feature>
<feature type="binding site" evidence="1">
    <location>
        <position position="408"/>
    </location>
    <ligand>
        <name>ATP</name>
        <dbReference type="ChEBI" id="CHEBI:30616"/>
    </ligand>
</feature>
<feature type="binding site" evidence="1">
    <location>
        <position position="412"/>
    </location>
    <ligand>
        <name>ADP</name>
        <dbReference type="ChEBI" id="CHEBI:456216"/>
    </ligand>
</feature>
<organism>
    <name type="scientific">Citrifermentans bemidjiense (strain ATCC BAA-1014 / DSM 16622 / JCM 12645 / Bem)</name>
    <name type="common">Geobacter bemidjiensis</name>
    <dbReference type="NCBI Taxonomy" id="404380"/>
    <lineage>
        <taxon>Bacteria</taxon>
        <taxon>Pseudomonadati</taxon>
        <taxon>Thermodesulfobacteriota</taxon>
        <taxon>Desulfuromonadia</taxon>
        <taxon>Geobacterales</taxon>
        <taxon>Geobacteraceae</taxon>
        <taxon>Citrifermentans</taxon>
    </lineage>
</organism>
<evidence type="ECO:0000255" key="1">
    <source>
        <dbReference type="HAMAP-Rule" id="MF_00186"/>
    </source>
</evidence>
<proteinExistence type="inferred from homology"/>
<accession>B5EB79</accession>
<protein>
    <recommendedName>
        <fullName evidence="1">Glycerol kinase</fullName>
        <ecNumber evidence="1">2.7.1.30</ecNumber>
    </recommendedName>
    <alternativeName>
        <fullName evidence="1">ATP:glycerol 3-phosphotransferase</fullName>
    </alternativeName>
    <alternativeName>
        <fullName evidence="1">Glycerokinase</fullName>
        <shortName evidence="1">GK</shortName>
    </alternativeName>
</protein>
<name>GLPK_CITBB</name>